<protein>
    <recommendedName>
        <fullName evidence="1">Small ribosomal subunit protein uS17</fullName>
    </recommendedName>
    <alternativeName>
        <fullName evidence="2">30S ribosomal protein S17</fullName>
    </alternativeName>
</protein>
<evidence type="ECO:0000255" key="1">
    <source>
        <dbReference type="HAMAP-Rule" id="MF_01345"/>
    </source>
</evidence>
<evidence type="ECO:0000305" key="2"/>
<proteinExistence type="inferred from homology"/>
<organism>
    <name type="scientific">Ligilactobacillus salivarius (strain UCC118)</name>
    <name type="common">Lactobacillus salivarius</name>
    <dbReference type="NCBI Taxonomy" id="362948"/>
    <lineage>
        <taxon>Bacteria</taxon>
        <taxon>Bacillati</taxon>
        <taxon>Bacillota</taxon>
        <taxon>Bacilli</taxon>
        <taxon>Lactobacillales</taxon>
        <taxon>Lactobacillaceae</taxon>
        <taxon>Ligilactobacillus</taxon>
    </lineage>
</organism>
<name>RS17_LIGS1</name>
<feature type="chain" id="PRO_0000255683" description="Small ribosomal subunit protein uS17">
    <location>
        <begin position="1"/>
        <end position="88"/>
    </location>
</feature>
<reference key="1">
    <citation type="journal article" date="2006" name="Proc. Natl. Acad. Sci. U.S.A.">
        <title>Multireplicon genome architecture of Lactobacillus salivarius.</title>
        <authorList>
            <person name="Claesson M.J."/>
            <person name="Li Y."/>
            <person name="Leahy S."/>
            <person name="Canchaya C."/>
            <person name="van Pijkeren J.P."/>
            <person name="Cerdeno-Tarraga A.M."/>
            <person name="Parkhill J."/>
            <person name="Flynn S."/>
            <person name="O'Sullivan G.C."/>
            <person name="Collins J.K."/>
            <person name="Higgins D."/>
            <person name="Shanahan F."/>
            <person name="Fitzgerald G.F."/>
            <person name="van Sinderen D."/>
            <person name="O'Toole P.W."/>
        </authorList>
    </citation>
    <scope>NUCLEOTIDE SEQUENCE [LARGE SCALE GENOMIC DNA]</scope>
    <source>
        <strain>UCC118</strain>
    </source>
</reference>
<gene>
    <name evidence="1" type="primary">rpsQ</name>
    <name type="ordered locus">LSL_1426</name>
</gene>
<accession>Q1WS99</accession>
<comment type="function">
    <text evidence="1">One of the primary rRNA binding proteins, it binds specifically to the 5'-end of 16S ribosomal RNA.</text>
</comment>
<comment type="subunit">
    <text evidence="1">Part of the 30S ribosomal subunit.</text>
</comment>
<comment type="similarity">
    <text evidence="1">Belongs to the universal ribosomal protein uS17 family.</text>
</comment>
<sequence length="88" mass="10299">MSESRNQRKVYQGRVVSDKMDKTITVVVETYKNHKVYGKRVKYSKKFKAHDENNEAKVGDIVKIMETRPLSATKRFRLLEIVEKAVIL</sequence>
<keyword id="KW-1185">Reference proteome</keyword>
<keyword id="KW-0687">Ribonucleoprotein</keyword>
<keyword id="KW-0689">Ribosomal protein</keyword>
<keyword id="KW-0694">RNA-binding</keyword>
<keyword id="KW-0699">rRNA-binding</keyword>
<dbReference type="EMBL" id="CP000233">
    <property type="protein sequence ID" value="ABE00230.1"/>
    <property type="molecule type" value="Genomic_DNA"/>
</dbReference>
<dbReference type="RefSeq" id="WP_003701314.1">
    <property type="nucleotide sequence ID" value="NC_007929.1"/>
</dbReference>
<dbReference type="RefSeq" id="YP_536313.1">
    <property type="nucleotide sequence ID" value="NC_007929.1"/>
</dbReference>
<dbReference type="SMR" id="Q1WS99"/>
<dbReference type="STRING" id="362948.LSL_1426"/>
<dbReference type="GeneID" id="89466161"/>
<dbReference type="KEGG" id="lsl:LSL_1426"/>
<dbReference type="PATRIC" id="fig|362948.14.peg.1509"/>
<dbReference type="HOGENOM" id="CLU_073626_1_0_9"/>
<dbReference type="OrthoDB" id="9811714at2"/>
<dbReference type="Proteomes" id="UP000006559">
    <property type="component" value="Chromosome"/>
</dbReference>
<dbReference type="GO" id="GO:0022627">
    <property type="term" value="C:cytosolic small ribosomal subunit"/>
    <property type="evidence" value="ECO:0007669"/>
    <property type="project" value="TreeGrafter"/>
</dbReference>
<dbReference type="GO" id="GO:0019843">
    <property type="term" value="F:rRNA binding"/>
    <property type="evidence" value="ECO:0007669"/>
    <property type="project" value="UniProtKB-UniRule"/>
</dbReference>
<dbReference type="GO" id="GO:0003735">
    <property type="term" value="F:structural constituent of ribosome"/>
    <property type="evidence" value="ECO:0007669"/>
    <property type="project" value="InterPro"/>
</dbReference>
<dbReference type="GO" id="GO:0006412">
    <property type="term" value="P:translation"/>
    <property type="evidence" value="ECO:0007669"/>
    <property type="project" value="UniProtKB-UniRule"/>
</dbReference>
<dbReference type="CDD" id="cd00364">
    <property type="entry name" value="Ribosomal_uS17"/>
    <property type="match status" value="1"/>
</dbReference>
<dbReference type="FunFam" id="2.40.50.140:FF:000026">
    <property type="entry name" value="30S ribosomal protein S17"/>
    <property type="match status" value="1"/>
</dbReference>
<dbReference type="Gene3D" id="2.40.50.140">
    <property type="entry name" value="Nucleic acid-binding proteins"/>
    <property type="match status" value="1"/>
</dbReference>
<dbReference type="HAMAP" id="MF_01345_B">
    <property type="entry name" value="Ribosomal_uS17_B"/>
    <property type="match status" value="1"/>
</dbReference>
<dbReference type="InterPro" id="IPR012340">
    <property type="entry name" value="NA-bd_OB-fold"/>
</dbReference>
<dbReference type="InterPro" id="IPR000266">
    <property type="entry name" value="Ribosomal_uS17"/>
</dbReference>
<dbReference type="InterPro" id="IPR019984">
    <property type="entry name" value="Ribosomal_uS17_bact/chlr"/>
</dbReference>
<dbReference type="InterPro" id="IPR019979">
    <property type="entry name" value="Ribosomal_uS17_CS"/>
</dbReference>
<dbReference type="NCBIfam" id="NF004123">
    <property type="entry name" value="PRK05610.1"/>
    <property type="match status" value="1"/>
</dbReference>
<dbReference type="NCBIfam" id="TIGR03635">
    <property type="entry name" value="uS17_bact"/>
    <property type="match status" value="1"/>
</dbReference>
<dbReference type="PANTHER" id="PTHR10744">
    <property type="entry name" value="40S RIBOSOMAL PROTEIN S11 FAMILY MEMBER"/>
    <property type="match status" value="1"/>
</dbReference>
<dbReference type="PANTHER" id="PTHR10744:SF1">
    <property type="entry name" value="SMALL RIBOSOMAL SUBUNIT PROTEIN US17M"/>
    <property type="match status" value="1"/>
</dbReference>
<dbReference type="Pfam" id="PF00366">
    <property type="entry name" value="Ribosomal_S17"/>
    <property type="match status" value="1"/>
</dbReference>
<dbReference type="PRINTS" id="PR00973">
    <property type="entry name" value="RIBOSOMALS17"/>
</dbReference>
<dbReference type="SUPFAM" id="SSF50249">
    <property type="entry name" value="Nucleic acid-binding proteins"/>
    <property type="match status" value="1"/>
</dbReference>
<dbReference type="PROSITE" id="PS00056">
    <property type="entry name" value="RIBOSOMAL_S17"/>
    <property type="match status" value="1"/>
</dbReference>